<organism>
    <name type="scientific">Thermosipho melanesiensis (strain DSM 12029 / CIP 104789 / BI429)</name>
    <dbReference type="NCBI Taxonomy" id="391009"/>
    <lineage>
        <taxon>Bacteria</taxon>
        <taxon>Thermotogati</taxon>
        <taxon>Thermotogota</taxon>
        <taxon>Thermotogae</taxon>
        <taxon>Thermotogales</taxon>
        <taxon>Fervidobacteriaceae</taxon>
        <taxon>Thermosipho</taxon>
    </lineage>
</organism>
<sequence>MKLNLVGLGRNTPIYILEKFDFDEQEFFSSLKVKTTEVAVLKTCHRREIYYIGDKEPLTINEIIEPYIIRKSGIDVVRHLFKVSCGLDSMVLGEHQILSQVKNTHKNFCHGKILNKLFNEAVSLGKEARTKTGINKYPLSISYIAVKLIEEQINIEGKKIFVIGTGMMGQKVIKYLVSRGADIYISNRTIKKAYEIKKMFSEVNIVDFEEKYKHISSSDVVISATNAPHYVVEEKKVNSQKNIIFIDLSMPRNIEPSIKEYHTLYTLEDLNEISKKYNKLRQEKISTIQNLIETRIKKFLTWYKLQTVKDDILYIQNLAEKLVYEEIEKLSKKILLDDNSLKQIQKSLKSCTKKIVSYHINYIKEKVI</sequence>
<comment type="function">
    <text evidence="1">Catalyzes the NADPH-dependent reduction of glutamyl-tRNA(Glu) to glutamate 1-semialdehyde (GSA).</text>
</comment>
<comment type="catalytic activity">
    <reaction evidence="1">
        <text>(S)-4-amino-5-oxopentanoate + tRNA(Glu) + NADP(+) = L-glutamyl-tRNA(Glu) + NADPH + H(+)</text>
        <dbReference type="Rhea" id="RHEA:12344"/>
        <dbReference type="Rhea" id="RHEA-COMP:9663"/>
        <dbReference type="Rhea" id="RHEA-COMP:9680"/>
        <dbReference type="ChEBI" id="CHEBI:15378"/>
        <dbReference type="ChEBI" id="CHEBI:57501"/>
        <dbReference type="ChEBI" id="CHEBI:57783"/>
        <dbReference type="ChEBI" id="CHEBI:58349"/>
        <dbReference type="ChEBI" id="CHEBI:78442"/>
        <dbReference type="ChEBI" id="CHEBI:78520"/>
        <dbReference type="EC" id="1.2.1.70"/>
    </reaction>
</comment>
<comment type="pathway">
    <text evidence="1">Porphyrin-containing compound metabolism; protoporphyrin-IX biosynthesis; 5-aminolevulinate from L-glutamyl-tRNA(Glu): step 1/2.</text>
</comment>
<comment type="subunit">
    <text evidence="1">Homodimer.</text>
</comment>
<comment type="domain">
    <text evidence="1">Possesses an unusual extended V-shaped dimeric structure with each monomer consisting of three distinct domains arranged along a curved 'spinal' alpha-helix. The N-terminal catalytic domain specifically recognizes the glutamate moiety of the substrate. The second domain is the NADPH-binding domain, and the third C-terminal domain is responsible for dimerization.</text>
</comment>
<comment type="miscellaneous">
    <text evidence="1">During catalysis, the active site Cys acts as a nucleophile attacking the alpha-carbonyl group of tRNA-bound glutamate with the formation of a thioester intermediate between enzyme and glutamate, and the concomitant release of tRNA(Glu). The thioester intermediate is finally reduced by direct hydride transfer from NADPH, to form the product GSA.</text>
</comment>
<comment type="similarity">
    <text evidence="1">Belongs to the glutamyl-tRNA reductase family.</text>
</comment>
<dbReference type="EC" id="1.2.1.70" evidence="1"/>
<dbReference type="EMBL" id="CP000716">
    <property type="protein sequence ID" value="ABR30570.1"/>
    <property type="molecule type" value="Genomic_DNA"/>
</dbReference>
<dbReference type="RefSeq" id="WP_012056931.1">
    <property type="nucleotide sequence ID" value="NC_009616.1"/>
</dbReference>
<dbReference type="SMR" id="A6LKW9"/>
<dbReference type="STRING" id="391009.Tmel_0706"/>
<dbReference type="KEGG" id="tme:Tmel_0706"/>
<dbReference type="eggNOG" id="COG0373">
    <property type="taxonomic scope" value="Bacteria"/>
</dbReference>
<dbReference type="HOGENOM" id="CLU_035113_2_2_0"/>
<dbReference type="OrthoDB" id="110209at2"/>
<dbReference type="UniPathway" id="UPA00251">
    <property type="reaction ID" value="UER00316"/>
</dbReference>
<dbReference type="Proteomes" id="UP000001110">
    <property type="component" value="Chromosome"/>
</dbReference>
<dbReference type="GO" id="GO:0008883">
    <property type="term" value="F:glutamyl-tRNA reductase activity"/>
    <property type="evidence" value="ECO:0007669"/>
    <property type="project" value="UniProtKB-UniRule"/>
</dbReference>
<dbReference type="GO" id="GO:0050661">
    <property type="term" value="F:NADP binding"/>
    <property type="evidence" value="ECO:0007669"/>
    <property type="project" value="InterPro"/>
</dbReference>
<dbReference type="GO" id="GO:0019353">
    <property type="term" value="P:protoporphyrinogen IX biosynthetic process from glutamate"/>
    <property type="evidence" value="ECO:0007669"/>
    <property type="project" value="TreeGrafter"/>
</dbReference>
<dbReference type="CDD" id="cd05213">
    <property type="entry name" value="NAD_bind_Glutamyl_tRNA_reduct"/>
    <property type="match status" value="1"/>
</dbReference>
<dbReference type="Gene3D" id="3.30.460.30">
    <property type="entry name" value="Glutamyl-tRNA reductase, N-terminal domain"/>
    <property type="match status" value="1"/>
</dbReference>
<dbReference type="Gene3D" id="3.40.50.720">
    <property type="entry name" value="NAD(P)-binding Rossmann-like Domain"/>
    <property type="match status" value="1"/>
</dbReference>
<dbReference type="HAMAP" id="MF_00087">
    <property type="entry name" value="Glu_tRNA_reductase"/>
    <property type="match status" value="1"/>
</dbReference>
<dbReference type="InterPro" id="IPR000343">
    <property type="entry name" value="4pyrrol_synth_GluRdtase"/>
</dbReference>
<dbReference type="InterPro" id="IPR015896">
    <property type="entry name" value="4pyrrol_synth_GluRdtase_dimer"/>
</dbReference>
<dbReference type="InterPro" id="IPR015895">
    <property type="entry name" value="4pyrrol_synth_GluRdtase_N"/>
</dbReference>
<dbReference type="InterPro" id="IPR018214">
    <property type="entry name" value="GluRdtase_CS"/>
</dbReference>
<dbReference type="InterPro" id="IPR036453">
    <property type="entry name" value="GluRdtase_dimer_dom_sf"/>
</dbReference>
<dbReference type="InterPro" id="IPR036343">
    <property type="entry name" value="GluRdtase_N_sf"/>
</dbReference>
<dbReference type="InterPro" id="IPR036291">
    <property type="entry name" value="NAD(P)-bd_dom_sf"/>
</dbReference>
<dbReference type="InterPro" id="IPR006151">
    <property type="entry name" value="Shikm_DH/Glu-tRNA_Rdtase"/>
</dbReference>
<dbReference type="NCBIfam" id="TIGR01035">
    <property type="entry name" value="hemA"/>
    <property type="match status" value="1"/>
</dbReference>
<dbReference type="PANTHER" id="PTHR43013">
    <property type="entry name" value="GLUTAMYL-TRNA REDUCTASE"/>
    <property type="match status" value="1"/>
</dbReference>
<dbReference type="PANTHER" id="PTHR43013:SF1">
    <property type="entry name" value="GLUTAMYL-TRNA REDUCTASE"/>
    <property type="match status" value="1"/>
</dbReference>
<dbReference type="Pfam" id="PF00745">
    <property type="entry name" value="GlutR_dimer"/>
    <property type="match status" value="1"/>
</dbReference>
<dbReference type="Pfam" id="PF05201">
    <property type="entry name" value="GlutR_N"/>
    <property type="match status" value="1"/>
</dbReference>
<dbReference type="Pfam" id="PF01488">
    <property type="entry name" value="Shikimate_DH"/>
    <property type="match status" value="1"/>
</dbReference>
<dbReference type="PIRSF" id="PIRSF000445">
    <property type="entry name" value="4pyrrol_synth_GluRdtase"/>
    <property type="match status" value="1"/>
</dbReference>
<dbReference type="SUPFAM" id="SSF69742">
    <property type="entry name" value="Glutamyl tRNA-reductase catalytic, N-terminal domain"/>
    <property type="match status" value="1"/>
</dbReference>
<dbReference type="SUPFAM" id="SSF69075">
    <property type="entry name" value="Glutamyl tRNA-reductase dimerization domain"/>
    <property type="match status" value="1"/>
</dbReference>
<dbReference type="SUPFAM" id="SSF51735">
    <property type="entry name" value="NAD(P)-binding Rossmann-fold domains"/>
    <property type="match status" value="1"/>
</dbReference>
<dbReference type="PROSITE" id="PS00747">
    <property type="entry name" value="GLUTR"/>
    <property type="match status" value="1"/>
</dbReference>
<name>HEM1_THEM4</name>
<reference key="1">
    <citation type="submission" date="2007-05" db="EMBL/GenBank/DDBJ databases">
        <title>Complete sequence of Thermosipho melanesiensis BI429.</title>
        <authorList>
            <consortium name="US DOE Joint Genome Institute"/>
            <person name="Copeland A."/>
            <person name="Lucas S."/>
            <person name="Lapidus A."/>
            <person name="Barry K."/>
            <person name="Glavina del Rio T."/>
            <person name="Dalin E."/>
            <person name="Tice H."/>
            <person name="Pitluck S."/>
            <person name="Chertkov O."/>
            <person name="Brettin T."/>
            <person name="Bruce D."/>
            <person name="Detter J.C."/>
            <person name="Han C."/>
            <person name="Schmutz J."/>
            <person name="Larimer F."/>
            <person name="Land M."/>
            <person name="Hauser L."/>
            <person name="Kyrpides N."/>
            <person name="Mikhailova N."/>
            <person name="Nelson K."/>
            <person name="Gogarten J.P."/>
            <person name="Noll K."/>
            <person name="Richardson P."/>
        </authorList>
    </citation>
    <scope>NUCLEOTIDE SEQUENCE [LARGE SCALE GENOMIC DNA]</scope>
    <source>
        <strain>DSM 12029 / CIP 104789 / BI429</strain>
    </source>
</reference>
<proteinExistence type="inferred from homology"/>
<gene>
    <name evidence="1" type="primary">hemA</name>
    <name type="ordered locus">Tmel_0706</name>
</gene>
<accession>A6LKW9</accession>
<keyword id="KW-0521">NADP</keyword>
<keyword id="KW-0560">Oxidoreductase</keyword>
<keyword id="KW-0627">Porphyrin biosynthesis</keyword>
<protein>
    <recommendedName>
        <fullName evidence="1">Glutamyl-tRNA reductase</fullName>
        <shortName evidence="1">GluTR</shortName>
        <ecNumber evidence="1">1.2.1.70</ecNumber>
    </recommendedName>
</protein>
<feature type="chain" id="PRO_1000004716" description="Glutamyl-tRNA reductase">
    <location>
        <begin position="1"/>
        <end position="368"/>
    </location>
</feature>
<feature type="active site" description="Nucleophile" evidence="1">
    <location>
        <position position="44"/>
    </location>
</feature>
<feature type="binding site" evidence="1">
    <location>
        <begin position="43"/>
        <end position="46"/>
    </location>
    <ligand>
        <name>substrate</name>
    </ligand>
</feature>
<feature type="binding site" evidence="1">
    <location>
        <position position="89"/>
    </location>
    <ligand>
        <name>substrate</name>
    </ligand>
</feature>
<feature type="binding site" evidence="1">
    <location>
        <begin position="94"/>
        <end position="96"/>
    </location>
    <ligand>
        <name>substrate</name>
    </ligand>
</feature>
<feature type="binding site" evidence="1">
    <location>
        <position position="100"/>
    </location>
    <ligand>
        <name>substrate</name>
    </ligand>
</feature>
<feature type="binding site" evidence="1">
    <location>
        <begin position="164"/>
        <end position="169"/>
    </location>
    <ligand>
        <name>NADP(+)</name>
        <dbReference type="ChEBI" id="CHEBI:58349"/>
    </ligand>
</feature>
<feature type="site" description="Important for activity" evidence="1">
    <location>
        <position position="79"/>
    </location>
</feature>
<evidence type="ECO:0000255" key="1">
    <source>
        <dbReference type="HAMAP-Rule" id="MF_00087"/>
    </source>
</evidence>